<evidence type="ECO:0000255" key="1">
    <source>
        <dbReference type="HAMAP-Rule" id="MF_00575"/>
    </source>
</evidence>
<keyword id="KW-0997">Cell inner membrane</keyword>
<keyword id="KW-1003">Cell membrane</keyword>
<keyword id="KW-0378">Hydrolase</keyword>
<keyword id="KW-0441">Lipid A biosynthesis</keyword>
<keyword id="KW-0444">Lipid biosynthesis</keyword>
<keyword id="KW-0443">Lipid metabolism</keyword>
<keyword id="KW-0464">Manganese</keyword>
<keyword id="KW-0472">Membrane</keyword>
<keyword id="KW-0479">Metal-binding</keyword>
<keyword id="KW-1185">Reference proteome</keyword>
<organism>
    <name type="scientific">Haemophilus ducreyi (strain 35000HP / ATCC 700724)</name>
    <dbReference type="NCBI Taxonomy" id="233412"/>
    <lineage>
        <taxon>Bacteria</taxon>
        <taxon>Pseudomonadati</taxon>
        <taxon>Pseudomonadota</taxon>
        <taxon>Gammaproteobacteria</taxon>
        <taxon>Pasteurellales</taxon>
        <taxon>Pasteurellaceae</taxon>
        <taxon>Haemophilus</taxon>
    </lineage>
</organism>
<protein>
    <recommendedName>
        <fullName evidence="1">UDP-2,3-diacylglucosamine hydrolase</fullName>
        <ecNumber evidence="1">3.6.1.54</ecNumber>
    </recommendedName>
    <alternativeName>
        <fullName evidence="1">UDP-2,3-diacylglucosamine diphosphatase</fullName>
    </alternativeName>
</protein>
<gene>
    <name evidence="1" type="primary">lpxH</name>
    <name type="ordered locus">HD_1938</name>
</gene>
<reference key="1">
    <citation type="submission" date="2003-06" db="EMBL/GenBank/DDBJ databases">
        <title>The complete genome sequence of Haemophilus ducreyi.</title>
        <authorList>
            <person name="Munson R.S. Jr."/>
            <person name="Ray W.C."/>
            <person name="Mahairas G."/>
            <person name="Sabo P."/>
            <person name="Mungur R."/>
            <person name="Johnson L."/>
            <person name="Nguyen D."/>
            <person name="Wang J."/>
            <person name="Forst C."/>
            <person name="Hood L."/>
        </authorList>
    </citation>
    <scope>NUCLEOTIDE SEQUENCE [LARGE SCALE GENOMIC DNA]</scope>
    <source>
        <strain>35000HP / ATCC 700724</strain>
    </source>
</reference>
<feature type="chain" id="PRO_0000214111" description="UDP-2,3-diacylglucosamine hydrolase">
    <location>
        <begin position="1"/>
        <end position="234"/>
    </location>
</feature>
<feature type="binding site" evidence="1">
    <location>
        <position position="9"/>
    </location>
    <ligand>
        <name>Mn(2+)</name>
        <dbReference type="ChEBI" id="CHEBI:29035"/>
        <label>1</label>
    </ligand>
</feature>
<feature type="binding site" evidence="1">
    <location>
        <position position="11"/>
    </location>
    <ligand>
        <name>Mn(2+)</name>
        <dbReference type="ChEBI" id="CHEBI:29035"/>
        <label>1</label>
    </ligand>
</feature>
<feature type="binding site" evidence="1">
    <location>
        <position position="42"/>
    </location>
    <ligand>
        <name>Mn(2+)</name>
        <dbReference type="ChEBI" id="CHEBI:29035"/>
        <label>1</label>
    </ligand>
</feature>
<feature type="binding site" evidence="1">
    <location>
        <position position="42"/>
    </location>
    <ligand>
        <name>Mn(2+)</name>
        <dbReference type="ChEBI" id="CHEBI:29035"/>
        <label>2</label>
    </ligand>
</feature>
<feature type="binding site" evidence="1">
    <location>
        <begin position="80"/>
        <end position="81"/>
    </location>
    <ligand>
        <name>substrate</name>
    </ligand>
</feature>
<feature type="binding site" evidence="1">
    <location>
        <position position="80"/>
    </location>
    <ligand>
        <name>Mn(2+)</name>
        <dbReference type="ChEBI" id="CHEBI:29035"/>
        <label>2</label>
    </ligand>
</feature>
<feature type="binding site" evidence="1">
    <location>
        <position position="115"/>
    </location>
    <ligand>
        <name>Mn(2+)</name>
        <dbReference type="ChEBI" id="CHEBI:29035"/>
        <label>2</label>
    </ligand>
</feature>
<feature type="binding site" evidence="1">
    <location>
        <position position="123"/>
    </location>
    <ligand>
        <name>substrate</name>
    </ligand>
</feature>
<feature type="binding site" evidence="1">
    <location>
        <position position="161"/>
    </location>
    <ligand>
        <name>substrate</name>
    </ligand>
</feature>
<feature type="binding site" evidence="1">
    <location>
        <position position="165"/>
    </location>
    <ligand>
        <name>substrate</name>
    </ligand>
</feature>
<feature type="binding site" evidence="1">
    <location>
        <position position="168"/>
    </location>
    <ligand>
        <name>substrate</name>
    </ligand>
</feature>
<feature type="binding site" evidence="1">
    <location>
        <position position="196"/>
    </location>
    <ligand>
        <name>Mn(2+)</name>
        <dbReference type="ChEBI" id="CHEBI:29035"/>
        <label>2</label>
    </ligand>
</feature>
<feature type="binding site" evidence="1">
    <location>
        <position position="196"/>
    </location>
    <ligand>
        <name>substrate</name>
    </ligand>
</feature>
<feature type="binding site" evidence="1">
    <location>
        <position position="198"/>
    </location>
    <ligand>
        <name>Mn(2+)</name>
        <dbReference type="ChEBI" id="CHEBI:29035"/>
        <label>1</label>
    </ligand>
</feature>
<accession>Q7VKH0</accession>
<dbReference type="EC" id="3.6.1.54" evidence="1"/>
<dbReference type="EMBL" id="AE017143">
    <property type="protein sequence ID" value="AAP96658.1"/>
    <property type="molecule type" value="Genomic_DNA"/>
</dbReference>
<dbReference type="RefSeq" id="WP_010945685.1">
    <property type="nucleotide sequence ID" value="NC_002940.2"/>
</dbReference>
<dbReference type="SMR" id="Q7VKH0"/>
<dbReference type="STRING" id="233412.HD_1938"/>
<dbReference type="DNASU" id="1491773"/>
<dbReference type="KEGG" id="hdu:HD_1938"/>
<dbReference type="eggNOG" id="COG2908">
    <property type="taxonomic scope" value="Bacteria"/>
</dbReference>
<dbReference type="HOGENOM" id="CLU_074586_0_0_6"/>
<dbReference type="UniPathway" id="UPA00359">
    <property type="reaction ID" value="UER00480"/>
</dbReference>
<dbReference type="Proteomes" id="UP000001022">
    <property type="component" value="Chromosome"/>
</dbReference>
<dbReference type="GO" id="GO:0005737">
    <property type="term" value="C:cytoplasm"/>
    <property type="evidence" value="ECO:0007669"/>
    <property type="project" value="InterPro"/>
</dbReference>
<dbReference type="GO" id="GO:0019897">
    <property type="term" value="C:extrinsic component of plasma membrane"/>
    <property type="evidence" value="ECO:0007669"/>
    <property type="project" value="UniProtKB-UniRule"/>
</dbReference>
<dbReference type="GO" id="GO:0030145">
    <property type="term" value="F:manganese ion binding"/>
    <property type="evidence" value="ECO:0007669"/>
    <property type="project" value="UniProtKB-UniRule"/>
</dbReference>
<dbReference type="GO" id="GO:0008758">
    <property type="term" value="F:UDP-2,3-diacylglucosamine hydrolase activity"/>
    <property type="evidence" value="ECO:0007669"/>
    <property type="project" value="UniProtKB-UniRule"/>
</dbReference>
<dbReference type="GO" id="GO:0009245">
    <property type="term" value="P:lipid A biosynthetic process"/>
    <property type="evidence" value="ECO:0007669"/>
    <property type="project" value="UniProtKB-UniRule"/>
</dbReference>
<dbReference type="CDD" id="cd07398">
    <property type="entry name" value="MPP_YbbF-LpxH"/>
    <property type="match status" value="1"/>
</dbReference>
<dbReference type="Gene3D" id="3.60.21.10">
    <property type="match status" value="1"/>
</dbReference>
<dbReference type="HAMAP" id="MF_00575">
    <property type="entry name" value="LpxH"/>
    <property type="match status" value="1"/>
</dbReference>
<dbReference type="InterPro" id="IPR004843">
    <property type="entry name" value="Calcineurin-like_PHP_ApaH"/>
</dbReference>
<dbReference type="InterPro" id="IPR043461">
    <property type="entry name" value="LpxH-like"/>
</dbReference>
<dbReference type="InterPro" id="IPR029052">
    <property type="entry name" value="Metallo-depent_PP-like"/>
</dbReference>
<dbReference type="InterPro" id="IPR010138">
    <property type="entry name" value="UDP-diacylglucosamine_Hdrlase"/>
</dbReference>
<dbReference type="NCBIfam" id="TIGR01854">
    <property type="entry name" value="lipid_A_lpxH"/>
    <property type="match status" value="1"/>
</dbReference>
<dbReference type="NCBIfam" id="NF003743">
    <property type="entry name" value="PRK05340.1"/>
    <property type="match status" value="1"/>
</dbReference>
<dbReference type="PANTHER" id="PTHR34990:SF1">
    <property type="entry name" value="UDP-2,3-DIACYLGLUCOSAMINE HYDROLASE"/>
    <property type="match status" value="1"/>
</dbReference>
<dbReference type="PANTHER" id="PTHR34990">
    <property type="entry name" value="UDP-2,3-DIACYLGLUCOSAMINE HYDROLASE-RELATED"/>
    <property type="match status" value="1"/>
</dbReference>
<dbReference type="Pfam" id="PF00149">
    <property type="entry name" value="Metallophos"/>
    <property type="match status" value="1"/>
</dbReference>
<dbReference type="SUPFAM" id="SSF56300">
    <property type="entry name" value="Metallo-dependent phosphatases"/>
    <property type="match status" value="1"/>
</dbReference>
<proteinExistence type="inferred from homology"/>
<name>LPXH_HAEDU</name>
<sequence>MMTYYFIADLHLNESQPQITHQFLQFMQQKAPLAQAVYILGDFFDFWIGDDEQSVLISQVKLALKKLTASGVKCYFICGNRDFLLGQTFAQQTGIQLLADYHLLDLFGERTLLCHGDTLCIDDIKYQQFRRRVHQKRLQKLFLWLPLTLRIKIAQKIRRKSKQDKKNKSADIMDVNQAFTAQKVHQYGATHLIHGHTHRQAVHFEQNFTRIVLGDWRPDRSSILKVDEKGFEFL</sequence>
<comment type="function">
    <text evidence="1">Hydrolyzes the pyrophosphate bond of UDP-2,3-diacylglucosamine to yield 2,3-diacylglucosamine 1-phosphate (lipid X) and UMP by catalyzing the attack of water at the alpha-P atom. Involved in the biosynthesis of lipid A, a phosphorylated glycolipid that anchors the lipopolysaccharide to the outer membrane of the cell.</text>
</comment>
<comment type="catalytic activity">
    <reaction evidence="1">
        <text>UDP-2-N,3-O-bis[(3R)-3-hydroxytetradecanoyl]-alpha-D-glucosamine + H2O = 2-N,3-O-bis[(3R)-3-hydroxytetradecanoyl]-alpha-D-glucosaminyl 1-phosphate + UMP + 2 H(+)</text>
        <dbReference type="Rhea" id="RHEA:25213"/>
        <dbReference type="ChEBI" id="CHEBI:15377"/>
        <dbReference type="ChEBI" id="CHEBI:15378"/>
        <dbReference type="ChEBI" id="CHEBI:57865"/>
        <dbReference type="ChEBI" id="CHEBI:57957"/>
        <dbReference type="ChEBI" id="CHEBI:78847"/>
        <dbReference type="EC" id="3.6.1.54"/>
    </reaction>
</comment>
<comment type="cofactor">
    <cofactor evidence="1">
        <name>Mn(2+)</name>
        <dbReference type="ChEBI" id="CHEBI:29035"/>
    </cofactor>
    <text evidence="1">Binds 2 Mn(2+) ions per subunit in a binuclear metal center.</text>
</comment>
<comment type="pathway">
    <text evidence="1">Glycolipid biosynthesis; lipid IV(A) biosynthesis; lipid IV(A) from (3R)-3-hydroxytetradecanoyl-[acyl-carrier-protein] and UDP-N-acetyl-alpha-D-glucosamine: step 4/6.</text>
</comment>
<comment type="subcellular location">
    <subcellularLocation>
        <location evidence="1">Cell inner membrane</location>
        <topology evidence="1">Peripheral membrane protein</topology>
        <orientation evidence="1">Cytoplasmic side</orientation>
    </subcellularLocation>
</comment>
<comment type="similarity">
    <text evidence="1">Belongs to the LpxH family.</text>
</comment>